<dbReference type="EC" id="2.7.7.56" evidence="1"/>
<dbReference type="EMBL" id="BA000004">
    <property type="protein sequence ID" value="BAB06787.1"/>
    <property type="molecule type" value="Genomic_DNA"/>
</dbReference>
<dbReference type="PIR" id="D84033">
    <property type="entry name" value="D84033"/>
</dbReference>
<dbReference type="RefSeq" id="WP_010899212.1">
    <property type="nucleotide sequence ID" value="NC_002570.2"/>
</dbReference>
<dbReference type="SMR" id="Q9K8D8"/>
<dbReference type="STRING" id="272558.gene:10728980"/>
<dbReference type="KEGG" id="bha:BH3068"/>
<dbReference type="eggNOG" id="COG0689">
    <property type="taxonomic scope" value="Bacteria"/>
</dbReference>
<dbReference type="HOGENOM" id="CLU_050858_0_0_9"/>
<dbReference type="OrthoDB" id="9802265at2"/>
<dbReference type="Proteomes" id="UP000001258">
    <property type="component" value="Chromosome"/>
</dbReference>
<dbReference type="GO" id="GO:0000175">
    <property type="term" value="F:3'-5'-RNA exonuclease activity"/>
    <property type="evidence" value="ECO:0007669"/>
    <property type="project" value="UniProtKB-UniRule"/>
</dbReference>
<dbReference type="GO" id="GO:0000049">
    <property type="term" value="F:tRNA binding"/>
    <property type="evidence" value="ECO:0007669"/>
    <property type="project" value="UniProtKB-UniRule"/>
</dbReference>
<dbReference type="GO" id="GO:0009022">
    <property type="term" value="F:tRNA nucleotidyltransferase activity"/>
    <property type="evidence" value="ECO:0007669"/>
    <property type="project" value="UniProtKB-UniRule"/>
</dbReference>
<dbReference type="GO" id="GO:0016075">
    <property type="term" value="P:rRNA catabolic process"/>
    <property type="evidence" value="ECO:0007669"/>
    <property type="project" value="UniProtKB-UniRule"/>
</dbReference>
<dbReference type="GO" id="GO:0006364">
    <property type="term" value="P:rRNA processing"/>
    <property type="evidence" value="ECO:0007669"/>
    <property type="project" value="UniProtKB-KW"/>
</dbReference>
<dbReference type="GO" id="GO:0008033">
    <property type="term" value="P:tRNA processing"/>
    <property type="evidence" value="ECO:0007669"/>
    <property type="project" value="UniProtKB-UniRule"/>
</dbReference>
<dbReference type="CDD" id="cd11362">
    <property type="entry name" value="RNase_PH_bact"/>
    <property type="match status" value="1"/>
</dbReference>
<dbReference type="FunFam" id="3.30.230.70:FF:000003">
    <property type="entry name" value="Ribonuclease PH"/>
    <property type="match status" value="1"/>
</dbReference>
<dbReference type="Gene3D" id="3.30.230.70">
    <property type="entry name" value="GHMP Kinase, N-terminal domain"/>
    <property type="match status" value="1"/>
</dbReference>
<dbReference type="HAMAP" id="MF_00564">
    <property type="entry name" value="RNase_PH"/>
    <property type="match status" value="1"/>
</dbReference>
<dbReference type="InterPro" id="IPR001247">
    <property type="entry name" value="ExoRNase_PH_dom1"/>
</dbReference>
<dbReference type="InterPro" id="IPR015847">
    <property type="entry name" value="ExoRNase_PH_dom2"/>
</dbReference>
<dbReference type="InterPro" id="IPR036345">
    <property type="entry name" value="ExoRNase_PH_dom2_sf"/>
</dbReference>
<dbReference type="InterPro" id="IPR027408">
    <property type="entry name" value="PNPase/RNase_PH_dom_sf"/>
</dbReference>
<dbReference type="InterPro" id="IPR020568">
    <property type="entry name" value="Ribosomal_Su5_D2-typ_SF"/>
</dbReference>
<dbReference type="InterPro" id="IPR050080">
    <property type="entry name" value="RNase_PH"/>
</dbReference>
<dbReference type="InterPro" id="IPR002381">
    <property type="entry name" value="RNase_PH_bac-type"/>
</dbReference>
<dbReference type="InterPro" id="IPR018336">
    <property type="entry name" value="RNase_PH_CS"/>
</dbReference>
<dbReference type="NCBIfam" id="TIGR01966">
    <property type="entry name" value="RNasePH"/>
    <property type="match status" value="1"/>
</dbReference>
<dbReference type="PANTHER" id="PTHR11953">
    <property type="entry name" value="EXOSOME COMPLEX COMPONENT"/>
    <property type="match status" value="1"/>
</dbReference>
<dbReference type="PANTHER" id="PTHR11953:SF0">
    <property type="entry name" value="EXOSOME COMPLEX COMPONENT RRP41"/>
    <property type="match status" value="1"/>
</dbReference>
<dbReference type="Pfam" id="PF01138">
    <property type="entry name" value="RNase_PH"/>
    <property type="match status" value="1"/>
</dbReference>
<dbReference type="Pfam" id="PF03725">
    <property type="entry name" value="RNase_PH_C"/>
    <property type="match status" value="1"/>
</dbReference>
<dbReference type="SUPFAM" id="SSF55666">
    <property type="entry name" value="Ribonuclease PH domain 2-like"/>
    <property type="match status" value="1"/>
</dbReference>
<dbReference type="SUPFAM" id="SSF54211">
    <property type="entry name" value="Ribosomal protein S5 domain 2-like"/>
    <property type="match status" value="1"/>
</dbReference>
<dbReference type="PROSITE" id="PS01277">
    <property type="entry name" value="RIBONUCLEASE_PH"/>
    <property type="match status" value="1"/>
</dbReference>
<sequence length="257" mass="28267">MRMDERKADELRPISIEINYLHHPEGSVLISIGNTKVICTASLEDRVPPFLRGQGKGWITAEYSMLPRATEQRNMRESTRGKVSGRTMEIQRLIGRALRSIIDLDKIGERTVWIDCDVIQADGGTRTTSITGAFVALSLAMEKALANGAIQEWPIDDFLAAVSVGIDPKLGAILDLCYAEDAQAEVDMNVVMTGKGEYVELQGTGEEATFSHNQLLTILALADKGIKQLIEEQRNALGAIANRVDEAKQKKKEQSEA</sequence>
<name>RNPH_HALH5</name>
<keyword id="KW-0548">Nucleotidyltransferase</keyword>
<keyword id="KW-1185">Reference proteome</keyword>
<keyword id="KW-0694">RNA-binding</keyword>
<keyword id="KW-0698">rRNA processing</keyword>
<keyword id="KW-0808">Transferase</keyword>
<keyword id="KW-0819">tRNA processing</keyword>
<keyword id="KW-0820">tRNA-binding</keyword>
<accession>Q9K8D8</accession>
<feature type="chain" id="PRO_0000139866" description="Ribonuclease PH">
    <location>
        <begin position="1"/>
        <end position="257"/>
    </location>
</feature>
<feature type="binding site" evidence="1">
    <location>
        <position position="86"/>
    </location>
    <ligand>
        <name>phosphate</name>
        <dbReference type="ChEBI" id="CHEBI:43474"/>
        <note>substrate</note>
    </ligand>
</feature>
<feature type="binding site" evidence="1">
    <location>
        <begin position="124"/>
        <end position="126"/>
    </location>
    <ligand>
        <name>phosphate</name>
        <dbReference type="ChEBI" id="CHEBI:43474"/>
        <note>substrate</note>
    </ligand>
</feature>
<gene>
    <name evidence="1" type="primary">rph</name>
    <name type="ordered locus">BH3068</name>
</gene>
<organism>
    <name type="scientific">Halalkalibacterium halodurans (strain ATCC BAA-125 / DSM 18197 / FERM 7344 / JCM 9153 / C-125)</name>
    <name type="common">Bacillus halodurans</name>
    <dbReference type="NCBI Taxonomy" id="272558"/>
    <lineage>
        <taxon>Bacteria</taxon>
        <taxon>Bacillati</taxon>
        <taxon>Bacillota</taxon>
        <taxon>Bacilli</taxon>
        <taxon>Bacillales</taxon>
        <taxon>Bacillaceae</taxon>
        <taxon>Halalkalibacterium (ex Joshi et al. 2022)</taxon>
    </lineage>
</organism>
<evidence type="ECO:0000255" key="1">
    <source>
        <dbReference type="HAMAP-Rule" id="MF_00564"/>
    </source>
</evidence>
<protein>
    <recommendedName>
        <fullName evidence="1">Ribonuclease PH</fullName>
        <shortName evidence="1">RNase PH</shortName>
        <ecNumber evidence="1">2.7.7.56</ecNumber>
    </recommendedName>
    <alternativeName>
        <fullName evidence="1">tRNA nucleotidyltransferase</fullName>
    </alternativeName>
</protein>
<reference key="1">
    <citation type="journal article" date="2000" name="Nucleic Acids Res.">
        <title>Complete genome sequence of the alkaliphilic bacterium Bacillus halodurans and genomic sequence comparison with Bacillus subtilis.</title>
        <authorList>
            <person name="Takami H."/>
            <person name="Nakasone K."/>
            <person name="Takaki Y."/>
            <person name="Maeno G."/>
            <person name="Sasaki R."/>
            <person name="Masui N."/>
            <person name="Fuji F."/>
            <person name="Hirama C."/>
            <person name="Nakamura Y."/>
            <person name="Ogasawara N."/>
            <person name="Kuhara S."/>
            <person name="Horikoshi K."/>
        </authorList>
    </citation>
    <scope>NUCLEOTIDE SEQUENCE [LARGE SCALE GENOMIC DNA]</scope>
    <source>
        <strain>ATCC BAA-125 / DSM 18197 / FERM 7344 / JCM 9153 / C-125</strain>
    </source>
</reference>
<proteinExistence type="inferred from homology"/>
<comment type="function">
    <text evidence="1">Phosphorolytic 3'-5' exoribonuclease that plays an important role in tRNA 3'-end maturation. Removes nucleotide residues following the 3'-CCA terminus of tRNAs; can also add nucleotides to the ends of RNA molecules by using nucleoside diphosphates as substrates, but this may not be physiologically important. Probably plays a role in initiation of 16S rRNA degradation (leading to ribosome degradation) during starvation.</text>
</comment>
<comment type="catalytic activity">
    <reaction evidence="1">
        <text>tRNA(n+1) + phosphate = tRNA(n) + a ribonucleoside 5'-diphosphate</text>
        <dbReference type="Rhea" id="RHEA:10628"/>
        <dbReference type="Rhea" id="RHEA-COMP:17343"/>
        <dbReference type="Rhea" id="RHEA-COMP:17344"/>
        <dbReference type="ChEBI" id="CHEBI:43474"/>
        <dbReference type="ChEBI" id="CHEBI:57930"/>
        <dbReference type="ChEBI" id="CHEBI:173114"/>
        <dbReference type="EC" id="2.7.7.56"/>
    </reaction>
</comment>
<comment type="subunit">
    <text evidence="1">Homohexameric ring arranged as a trimer of dimers.</text>
</comment>
<comment type="similarity">
    <text evidence="1">Belongs to the RNase PH family.</text>
</comment>